<evidence type="ECO:0000255" key="1">
    <source>
        <dbReference type="PROSITE-ProRule" id="PRU00625"/>
    </source>
</evidence>
<evidence type="ECO:0000256" key="2">
    <source>
        <dbReference type="SAM" id="MobiDB-lite"/>
    </source>
</evidence>
<evidence type="ECO:0000269" key="3">
    <source>
    </source>
</evidence>
<evidence type="ECO:0000269" key="4">
    <source>
    </source>
</evidence>
<evidence type="ECO:0000303" key="5">
    <source>
    </source>
</evidence>
<evidence type="ECO:0000305" key="6"/>
<evidence type="ECO:0000312" key="7">
    <source>
        <dbReference type="EMBL" id="BAS89638.1"/>
    </source>
</evidence>
<evidence type="ECO:0000312" key="8">
    <source>
        <dbReference type="EMBL" id="CAE03051.2"/>
    </source>
</evidence>
<accession>Q7XQN1</accession>
<accession>A0A0P0WBK7</accession>
<comment type="function">
    <text evidence="4">Essential for tapetum development in anthers and microsporogenesis. May regulate the timing of tapetal programmed cell death (PCD) which is critical for pollen development.</text>
</comment>
<comment type="subcellular location">
    <subcellularLocation>
        <location evidence="1">Nucleus</location>
    </subcellularLocation>
</comment>
<comment type="developmental stage">
    <text evidence="3">Expressed in developing anthers during meiosis and young microspore stages.</text>
</comment>
<comment type="sequence caution" evidence="6">
    <conflict type="erroneous gene model prediction">
        <sequence resource="EMBL-CDS" id="BAS89638"/>
    </conflict>
</comment>
<feature type="chain" id="PRO_0000436453" description="Transcription factor MYB80">
    <location>
        <begin position="1"/>
        <end position="372"/>
    </location>
</feature>
<feature type="domain" description="HTH myb-type 1" evidence="1">
    <location>
        <begin position="9"/>
        <end position="65"/>
    </location>
</feature>
<feature type="domain" description="HTH myb-type 2" evidence="1">
    <location>
        <begin position="66"/>
        <end position="116"/>
    </location>
</feature>
<feature type="DNA-binding region" description="H-T-H motif" evidence="1">
    <location>
        <begin position="37"/>
        <end position="61"/>
    </location>
</feature>
<feature type="DNA-binding region" description="H-T-H motif" evidence="1">
    <location>
        <begin position="89"/>
        <end position="112"/>
    </location>
</feature>
<feature type="region of interest" description="Disordered" evidence="2">
    <location>
        <begin position="298"/>
        <end position="347"/>
    </location>
</feature>
<feature type="compositionally biased region" description="Polar residues" evidence="2">
    <location>
        <begin position="298"/>
        <end position="311"/>
    </location>
</feature>
<feature type="compositionally biased region" description="Basic and acidic residues" evidence="2">
    <location>
        <begin position="312"/>
        <end position="323"/>
    </location>
</feature>
<organism>
    <name type="scientific">Oryza sativa subsp. japonica</name>
    <name type="common">Rice</name>
    <dbReference type="NCBI Taxonomy" id="39947"/>
    <lineage>
        <taxon>Eukaryota</taxon>
        <taxon>Viridiplantae</taxon>
        <taxon>Streptophyta</taxon>
        <taxon>Embryophyta</taxon>
        <taxon>Tracheophyta</taxon>
        <taxon>Spermatophyta</taxon>
        <taxon>Magnoliopsida</taxon>
        <taxon>Liliopsida</taxon>
        <taxon>Poales</taxon>
        <taxon>Poaceae</taxon>
        <taxon>BOP clade</taxon>
        <taxon>Oryzoideae</taxon>
        <taxon>Oryzeae</taxon>
        <taxon>Oryzinae</taxon>
        <taxon>Oryza</taxon>
        <taxon>Oryza sativa</taxon>
    </lineage>
</organism>
<reference key="1">
    <citation type="journal article" date="2002" name="Nature">
        <title>Sequence and analysis of rice chromosome 4.</title>
        <authorList>
            <person name="Feng Q."/>
            <person name="Zhang Y."/>
            <person name="Hao P."/>
            <person name="Wang S."/>
            <person name="Fu G."/>
            <person name="Huang Y."/>
            <person name="Li Y."/>
            <person name="Zhu J."/>
            <person name="Liu Y."/>
            <person name="Hu X."/>
            <person name="Jia P."/>
            <person name="Zhang Y."/>
            <person name="Zhao Q."/>
            <person name="Ying K."/>
            <person name="Yu S."/>
            <person name="Tang Y."/>
            <person name="Weng Q."/>
            <person name="Zhang L."/>
            <person name="Lu Y."/>
            <person name="Mu J."/>
            <person name="Lu Y."/>
            <person name="Zhang L.S."/>
            <person name="Yu Z."/>
            <person name="Fan D."/>
            <person name="Liu X."/>
            <person name="Lu T."/>
            <person name="Li C."/>
            <person name="Wu Y."/>
            <person name="Sun T."/>
            <person name="Lei H."/>
            <person name="Li T."/>
            <person name="Hu H."/>
            <person name="Guan J."/>
            <person name="Wu M."/>
            <person name="Zhang R."/>
            <person name="Zhou B."/>
            <person name="Chen Z."/>
            <person name="Chen L."/>
            <person name="Jin Z."/>
            <person name="Wang R."/>
            <person name="Yin H."/>
            <person name="Cai Z."/>
            <person name="Ren S."/>
            <person name="Lv G."/>
            <person name="Gu W."/>
            <person name="Zhu G."/>
            <person name="Tu Y."/>
            <person name="Jia J."/>
            <person name="Zhang Y."/>
            <person name="Chen J."/>
            <person name="Kang H."/>
            <person name="Chen X."/>
            <person name="Shao C."/>
            <person name="Sun Y."/>
            <person name="Hu Q."/>
            <person name="Zhang X."/>
            <person name="Zhang W."/>
            <person name="Wang L."/>
            <person name="Ding C."/>
            <person name="Sheng H."/>
            <person name="Gu J."/>
            <person name="Chen S."/>
            <person name="Ni L."/>
            <person name="Zhu F."/>
            <person name="Chen W."/>
            <person name="Lan L."/>
            <person name="Lai Y."/>
            <person name="Cheng Z."/>
            <person name="Gu M."/>
            <person name="Jiang J."/>
            <person name="Li J."/>
            <person name="Hong G."/>
            <person name="Xue Y."/>
            <person name="Han B."/>
        </authorList>
    </citation>
    <scope>NUCLEOTIDE SEQUENCE [LARGE SCALE GENOMIC DNA]</scope>
    <source>
        <strain>cv. Nipponbare</strain>
    </source>
</reference>
<reference key="2">
    <citation type="journal article" date="2005" name="Nature">
        <title>The map-based sequence of the rice genome.</title>
        <authorList>
            <consortium name="International rice genome sequencing project (IRGSP)"/>
        </authorList>
    </citation>
    <scope>NUCLEOTIDE SEQUENCE [LARGE SCALE GENOMIC DNA]</scope>
    <source>
        <strain>cv. Nipponbare</strain>
    </source>
</reference>
<reference key="3">
    <citation type="journal article" date="2013" name="Rice">
        <title>Improvement of the Oryza sativa Nipponbare reference genome using next generation sequence and optical map data.</title>
        <authorList>
            <person name="Kawahara Y."/>
            <person name="de la Bastide M."/>
            <person name="Hamilton J.P."/>
            <person name="Kanamori H."/>
            <person name="McCombie W.R."/>
            <person name="Ouyang S."/>
            <person name="Schwartz D.C."/>
            <person name="Tanaka T."/>
            <person name="Wu J."/>
            <person name="Zhou S."/>
            <person name="Childs K.L."/>
            <person name="Davidson R.M."/>
            <person name="Lin H."/>
            <person name="Quesada-Ocampo L."/>
            <person name="Vaillancourt B."/>
            <person name="Sakai H."/>
            <person name="Lee S.S."/>
            <person name="Kim J."/>
            <person name="Numa H."/>
            <person name="Itoh T."/>
            <person name="Buell C.R."/>
            <person name="Matsumoto T."/>
        </authorList>
    </citation>
    <scope>GENOME REANNOTATION</scope>
    <source>
        <strain>cv. Nipponbare</strain>
    </source>
</reference>
<reference key="4">
    <citation type="journal article" date="2005" name="Plant Cell">
        <title>Rice undeveloped tapetum1 is a major regulator of early tapetum development.</title>
        <authorList>
            <person name="Jung K.H."/>
            <person name="Han M.J."/>
            <person name="Lee Y.S."/>
            <person name="Kim Y.W."/>
            <person name="Hwang I."/>
            <person name="Kim M.J."/>
            <person name="Kim Y.K."/>
            <person name="Nahm B.H."/>
            <person name="An G."/>
        </authorList>
    </citation>
    <scope>DEVELOPMENTAL STAGE</scope>
</reference>
<reference key="5">
    <citation type="journal article" date="2012" name="Plant Mol. Biol.">
        <title>MYB80, a regulator of tapetal and pollen development, is functionally conserved in crops.</title>
        <authorList>
            <person name="Phan H.A."/>
            <person name="Li S.F."/>
            <person name="Parish R.W."/>
        </authorList>
    </citation>
    <scope>FUNCTION</scope>
</reference>
<dbReference type="EMBL" id="AL606441">
    <property type="protein sequence ID" value="CAE03051.2"/>
    <property type="molecule type" value="Genomic_DNA"/>
</dbReference>
<dbReference type="EMBL" id="AP014960">
    <property type="protein sequence ID" value="BAS89638.1"/>
    <property type="status" value="ALT_SEQ"/>
    <property type="molecule type" value="Genomic_DNA"/>
</dbReference>
<dbReference type="RefSeq" id="XP_015635420.1">
    <property type="nucleotide sequence ID" value="XM_015779934.1"/>
</dbReference>
<dbReference type="SMR" id="Q7XQN1"/>
<dbReference type="FunCoup" id="Q7XQN1">
    <property type="interactions" value="3"/>
</dbReference>
<dbReference type="STRING" id="39947.Q7XQN1"/>
<dbReference type="PaxDb" id="39947-Q7XQN1"/>
<dbReference type="EnsemblPlants" id="Os04t0470600-01">
    <property type="protein sequence ID" value="Os04t0470600-01"/>
    <property type="gene ID" value="Os04g0470600"/>
</dbReference>
<dbReference type="GeneID" id="9272494"/>
<dbReference type="Gramene" id="Os04t0470600-01">
    <property type="protein sequence ID" value="Os04t0470600-01"/>
    <property type="gene ID" value="Os04g0470600"/>
</dbReference>
<dbReference type="KEGG" id="osa:9272494"/>
<dbReference type="InParanoid" id="Q7XQN1"/>
<dbReference type="OrthoDB" id="2143914at2759"/>
<dbReference type="Proteomes" id="UP000000763">
    <property type="component" value="Chromosome 4"/>
</dbReference>
<dbReference type="Proteomes" id="UP000059680">
    <property type="component" value="Chromosome 4"/>
</dbReference>
<dbReference type="GO" id="GO:0005634">
    <property type="term" value="C:nucleus"/>
    <property type="evidence" value="ECO:0007669"/>
    <property type="project" value="UniProtKB-SubCell"/>
</dbReference>
<dbReference type="GO" id="GO:0003682">
    <property type="term" value="F:chromatin binding"/>
    <property type="evidence" value="ECO:0007669"/>
    <property type="project" value="EnsemblPlants"/>
</dbReference>
<dbReference type="GO" id="GO:0003700">
    <property type="term" value="F:DNA-binding transcription factor activity"/>
    <property type="evidence" value="ECO:0007669"/>
    <property type="project" value="EnsemblPlants"/>
</dbReference>
<dbReference type="GO" id="GO:0043565">
    <property type="term" value="F:sequence-specific DNA binding"/>
    <property type="evidence" value="ECO:0007669"/>
    <property type="project" value="EnsemblPlants"/>
</dbReference>
<dbReference type="GO" id="GO:0048658">
    <property type="term" value="P:anther wall tapetum development"/>
    <property type="evidence" value="ECO:0000315"/>
    <property type="project" value="UniProtKB"/>
</dbReference>
<dbReference type="GO" id="GO:0009555">
    <property type="term" value="P:pollen development"/>
    <property type="evidence" value="ECO:0007669"/>
    <property type="project" value="EnsemblPlants"/>
</dbReference>
<dbReference type="GO" id="GO:0010090">
    <property type="term" value="P:trichome morphogenesis"/>
    <property type="evidence" value="ECO:0007669"/>
    <property type="project" value="EnsemblPlants"/>
</dbReference>
<dbReference type="CDD" id="cd00167">
    <property type="entry name" value="SANT"/>
    <property type="match status" value="2"/>
</dbReference>
<dbReference type="FunFam" id="1.10.10.60:FF:000204">
    <property type="entry name" value="transcription factor MYB80"/>
    <property type="match status" value="1"/>
</dbReference>
<dbReference type="FunFam" id="1.10.10.60:FF:000015">
    <property type="entry name" value="Transcription factor RAX3"/>
    <property type="match status" value="1"/>
</dbReference>
<dbReference type="Gene3D" id="1.10.10.60">
    <property type="entry name" value="Homeodomain-like"/>
    <property type="match status" value="2"/>
</dbReference>
<dbReference type="InterPro" id="IPR009057">
    <property type="entry name" value="Homeodomain-like_sf"/>
</dbReference>
<dbReference type="InterPro" id="IPR017930">
    <property type="entry name" value="Myb_dom"/>
</dbReference>
<dbReference type="InterPro" id="IPR015495">
    <property type="entry name" value="Myb_TF_plants"/>
</dbReference>
<dbReference type="InterPro" id="IPR001005">
    <property type="entry name" value="SANT/Myb"/>
</dbReference>
<dbReference type="PANTHER" id="PTHR47994">
    <property type="entry name" value="F14D16.11-RELATED"/>
    <property type="match status" value="1"/>
</dbReference>
<dbReference type="PANTHER" id="PTHR47994:SF2">
    <property type="entry name" value="TRANSCRIPTION FACTOR MYB80"/>
    <property type="match status" value="1"/>
</dbReference>
<dbReference type="Pfam" id="PF00249">
    <property type="entry name" value="Myb_DNA-binding"/>
    <property type="match status" value="2"/>
</dbReference>
<dbReference type="SMART" id="SM00717">
    <property type="entry name" value="SANT"/>
    <property type="match status" value="2"/>
</dbReference>
<dbReference type="SUPFAM" id="SSF46689">
    <property type="entry name" value="Homeodomain-like"/>
    <property type="match status" value="1"/>
</dbReference>
<dbReference type="PROSITE" id="PS51294">
    <property type="entry name" value="HTH_MYB"/>
    <property type="match status" value="2"/>
</dbReference>
<protein>
    <recommendedName>
        <fullName evidence="6">Transcription factor MYB80</fullName>
    </recommendedName>
    <alternativeName>
        <fullName evidence="6">Myb-related protein 80</fullName>
        <shortName evidence="5">OsMYB80</shortName>
    </alternativeName>
</protein>
<sequence length="372" mass="39699">MGRVPCCEKDNVKRGQWTPEEDNKLLSYITQYGTRNWRLIPKNAGLQRCGKSCRLRWTNYLRPDLKHGEFTDAEEQTIIKLHSVVGNRWSVIAAQLPGRTDNDVKNHWNTKLKKKLSGMGIDPVTHKSFSHLMAEIATTLAPPQVAHLAEAALGCFKDEMLHLLTKKRPSDFPSPAVHDGAGAGASASALAAPCFPAAPPHHPQADDTIERIKLGLSRAIMSDPSTASAAAAAAAPSAPAEDKPWPPGDMSEGLAGMYATYNPAAHAHAQAQAEFRYDGASAAQGYVLGGDGDQGTSMWSHQSLYSGSSGTEEARRELPEKGNDSVGSSGGDDDAADDGKDSGKGAASDMSGLFASDCVLWDLPDELTNHMV</sequence>
<proteinExistence type="evidence at transcript level"/>
<keyword id="KW-0217">Developmental protein</keyword>
<keyword id="KW-0238">DNA-binding</keyword>
<keyword id="KW-0539">Nucleus</keyword>
<keyword id="KW-1185">Reference proteome</keyword>
<keyword id="KW-0677">Repeat</keyword>
<keyword id="KW-0804">Transcription</keyword>
<keyword id="KW-0805">Transcription regulation</keyword>
<gene>
    <name evidence="5" type="primary">MYB80</name>
    <name evidence="7" type="ordered locus">Os04g0470600</name>
    <name evidence="6" type="ordered locus">LOC_Os04g39470</name>
    <name evidence="8" type="ORF">OSJNBa0089K21.5</name>
</gene>
<name>MYB80_ORYSJ</name>